<keyword id="KW-0067">ATP-binding</keyword>
<keyword id="KW-0997">Cell inner membrane</keyword>
<keyword id="KW-1003">Cell membrane</keyword>
<keyword id="KW-0963">Cytoplasm</keyword>
<keyword id="KW-0472">Membrane</keyword>
<keyword id="KW-0547">Nucleotide-binding</keyword>
<keyword id="KW-0653">Protein transport</keyword>
<keyword id="KW-0793">Thylakoid</keyword>
<keyword id="KW-1278">Translocase</keyword>
<keyword id="KW-0811">Translocation</keyword>
<keyword id="KW-0813">Transport</keyword>
<organism>
    <name type="scientific">Trichormus variabilis (strain ATCC 29413 / PCC 7937)</name>
    <name type="common">Anabaena variabilis</name>
    <dbReference type="NCBI Taxonomy" id="240292"/>
    <lineage>
        <taxon>Bacteria</taxon>
        <taxon>Bacillati</taxon>
        <taxon>Cyanobacteriota</taxon>
        <taxon>Cyanophyceae</taxon>
        <taxon>Nostocales</taxon>
        <taxon>Nostocaceae</taxon>
        <taxon>Trichormus</taxon>
    </lineage>
</organism>
<gene>
    <name evidence="1" type="primary">secA</name>
    <name type="ordered locus">Ava_2124</name>
</gene>
<dbReference type="EC" id="7.4.2.8" evidence="1"/>
<dbReference type="EMBL" id="CP000117">
    <property type="protein sequence ID" value="ABA21744.1"/>
    <property type="molecule type" value="Genomic_DNA"/>
</dbReference>
<dbReference type="SMR" id="Q3MB92"/>
<dbReference type="STRING" id="240292.Ava_2124"/>
<dbReference type="KEGG" id="ava:Ava_2124"/>
<dbReference type="eggNOG" id="COG0653">
    <property type="taxonomic scope" value="Bacteria"/>
</dbReference>
<dbReference type="HOGENOM" id="CLU_005314_3_0_3"/>
<dbReference type="Proteomes" id="UP000002533">
    <property type="component" value="Chromosome"/>
</dbReference>
<dbReference type="GO" id="GO:0031522">
    <property type="term" value="C:cell envelope Sec protein transport complex"/>
    <property type="evidence" value="ECO:0007669"/>
    <property type="project" value="TreeGrafter"/>
</dbReference>
<dbReference type="GO" id="GO:0005829">
    <property type="term" value="C:cytosol"/>
    <property type="evidence" value="ECO:0007669"/>
    <property type="project" value="TreeGrafter"/>
</dbReference>
<dbReference type="GO" id="GO:0031676">
    <property type="term" value="C:plasma membrane-derived thylakoid membrane"/>
    <property type="evidence" value="ECO:0007669"/>
    <property type="project" value="UniProtKB-SubCell"/>
</dbReference>
<dbReference type="GO" id="GO:0005524">
    <property type="term" value="F:ATP binding"/>
    <property type="evidence" value="ECO:0007669"/>
    <property type="project" value="UniProtKB-UniRule"/>
</dbReference>
<dbReference type="GO" id="GO:0008564">
    <property type="term" value="F:protein-exporting ATPase activity"/>
    <property type="evidence" value="ECO:0007669"/>
    <property type="project" value="UniProtKB-EC"/>
</dbReference>
<dbReference type="GO" id="GO:0065002">
    <property type="term" value="P:intracellular protein transmembrane transport"/>
    <property type="evidence" value="ECO:0007669"/>
    <property type="project" value="UniProtKB-UniRule"/>
</dbReference>
<dbReference type="GO" id="GO:0017038">
    <property type="term" value="P:protein import"/>
    <property type="evidence" value="ECO:0007669"/>
    <property type="project" value="InterPro"/>
</dbReference>
<dbReference type="GO" id="GO:0006605">
    <property type="term" value="P:protein targeting"/>
    <property type="evidence" value="ECO:0007669"/>
    <property type="project" value="UniProtKB-UniRule"/>
</dbReference>
<dbReference type="GO" id="GO:0043952">
    <property type="term" value="P:protein transport by the Sec complex"/>
    <property type="evidence" value="ECO:0007669"/>
    <property type="project" value="TreeGrafter"/>
</dbReference>
<dbReference type="CDD" id="cd17928">
    <property type="entry name" value="DEXDc_SecA"/>
    <property type="match status" value="1"/>
</dbReference>
<dbReference type="CDD" id="cd18803">
    <property type="entry name" value="SF2_C_secA"/>
    <property type="match status" value="1"/>
</dbReference>
<dbReference type="FunFam" id="3.90.1440.10:FF:000003">
    <property type="entry name" value="Preprotein translocase SecA subunit"/>
    <property type="match status" value="1"/>
</dbReference>
<dbReference type="FunFam" id="3.40.50.300:FF:000429">
    <property type="entry name" value="Preprotein translocase subunit SecA"/>
    <property type="match status" value="1"/>
</dbReference>
<dbReference type="FunFam" id="1.10.3060.10:FF:000003">
    <property type="entry name" value="Protein translocase subunit SecA"/>
    <property type="match status" value="1"/>
</dbReference>
<dbReference type="FunFam" id="3.40.50.300:FF:000334">
    <property type="entry name" value="Protein translocase subunit SecA"/>
    <property type="match status" value="1"/>
</dbReference>
<dbReference type="Gene3D" id="1.10.3060.10">
    <property type="entry name" value="Helical scaffold and wing domains of SecA"/>
    <property type="match status" value="1"/>
</dbReference>
<dbReference type="Gene3D" id="3.40.50.300">
    <property type="entry name" value="P-loop containing nucleotide triphosphate hydrolases"/>
    <property type="match status" value="2"/>
</dbReference>
<dbReference type="Gene3D" id="3.90.1440.10">
    <property type="entry name" value="SecA, preprotein cross-linking domain"/>
    <property type="match status" value="1"/>
</dbReference>
<dbReference type="HAMAP" id="MF_01382">
    <property type="entry name" value="SecA"/>
    <property type="match status" value="1"/>
</dbReference>
<dbReference type="InterPro" id="IPR014001">
    <property type="entry name" value="Helicase_ATP-bd"/>
</dbReference>
<dbReference type="InterPro" id="IPR027417">
    <property type="entry name" value="P-loop_NTPase"/>
</dbReference>
<dbReference type="InterPro" id="IPR000185">
    <property type="entry name" value="SecA"/>
</dbReference>
<dbReference type="InterPro" id="IPR020937">
    <property type="entry name" value="SecA_CS"/>
</dbReference>
<dbReference type="InterPro" id="IPR011115">
    <property type="entry name" value="SecA_DEAD"/>
</dbReference>
<dbReference type="InterPro" id="IPR014018">
    <property type="entry name" value="SecA_motor_DEAD"/>
</dbReference>
<dbReference type="InterPro" id="IPR011130">
    <property type="entry name" value="SecA_preprotein_X-link_dom"/>
</dbReference>
<dbReference type="InterPro" id="IPR044722">
    <property type="entry name" value="SecA_SF2_C"/>
</dbReference>
<dbReference type="InterPro" id="IPR011116">
    <property type="entry name" value="SecA_Wing/Scaffold"/>
</dbReference>
<dbReference type="InterPro" id="IPR036266">
    <property type="entry name" value="SecA_Wing/Scaffold_sf"/>
</dbReference>
<dbReference type="InterPro" id="IPR036670">
    <property type="entry name" value="SecA_X-link_sf"/>
</dbReference>
<dbReference type="NCBIfam" id="TIGR00963">
    <property type="entry name" value="secA"/>
    <property type="match status" value="1"/>
</dbReference>
<dbReference type="PANTHER" id="PTHR30612:SF0">
    <property type="entry name" value="CHLOROPLAST PROTEIN-TRANSPORTING ATPASE"/>
    <property type="match status" value="1"/>
</dbReference>
<dbReference type="PANTHER" id="PTHR30612">
    <property type="entry name" value="SECA INNER MEMBRANE COMPONENT OF SEC PROTEIN SECRETION SYSTEM"/>
    <property type="match status" value="1"/>
</dbReference>
<dbReference type="Pfam" id="PF21090">
    <property type="entry name" value="P-loop_SecA"/>
    <property type="match status" value="1"/>
</dbReference>
<dbReference type="Pfam" id="PF07517">
    <property type="entry name" value="SecA_DEAD"/>
    <property type="match status" value="1"/>
</dbReference>
<dbReference type="Pfam" id="PF01043">
    <property type="entry name" value="SecA_PP_bind"/>
    <property type="match status" value="1"/>
</dbReference>
<dbReference type="Pfam" id="PF07516">
    <property type="entry name" value="SecA_SW"/>
    <property type="match status" value="1"/>
</dbReference>
<dbReference type="PRINTS" id="PR00906">
    <property type="entry name" value="SECA"/>
</dbReference>
<dbReference type="SMART" id="SM00957">
    <property type="entry name" value="SecA_DEAD"/>
    <property type="match status" value="1"/>
</dbReference>
<dbReference type="SMART" id="SM00958">
    <property type="entry name" value="SecA_PP_bind"/>
    <property type="match status" value="1"/>
</dbReference>
<dbReference type="SUPFAM" id="SSF81886">
    <property type="entry name" value="Helical scaffold and wing domains of SecA"/>
    <property type="match status" value="1"/>
</dbReference>
<dbReference type="SUPFAM" id="SSF52540">
    <property type="entry name" value="P-loop containing nucleoside triphosphate hydrolases"/>
    <property type="match status" value="2"/>
</dbReference>
<dbReference type="SUPFAM" id="SSF81767">
    <property type="entry name" value="Pre-protein crosslinking domain of SecA"/>
    <property type="match status" value="1"/>
</dbReference>
<dbReference type="PROSITE" id="PS01312">
    <property type="entry name" value="SECA"/>
    <property type="match status" value="1"/>
</dbReference>
<dbReference type="PROSITE" id="PS51196">
    <property type="entry name" value="SECA_MOTOR_DEAD"/>
    <property type="match status" value="1"/>
</dbReference>
<accession>Q3MB92</accession>
<feature type="chain" id="PRO_0000318306" description="Protein translocase subunit SecA">
    <location>
        <begin position="1"/>
        <end position="930"/>
    </location>
</feature>
<feature type="binding site" evidence="1">
    <location>
        <position position="83"/>
    </location>
    <ligand>
        <name>ATP</name>
        <dbReference type="ChEBI" id="CHEBI:30616"/>
    </ligand>
</feature>
<feature type="binding site" evidence="1">
    <location>
        <begin position="101"/>
        <end position="105"/>
    </location>
    <ligand>
        <name>ATP</name>
        <dbReference type="ChEBI" id="CHEBI:30616"/>
    </ligand>
</feature>
<feature type="binding site" evidence="1">
    <location>
        <position position="491"/>
    </location>
    <ligand>
        <name>ATP</name>
        <dbReference type="ChEBI" id="CHEBI:30616"/>
    </ligand>
</feature>
<protein>
    <recommendedName>
        <fullName evidence="1">Protein translocase subunit SecA</fullName>
        <ecNumber evidence="1">7.4.2.8</ecNumber>
    </recommendedName>
</protein>
<comment type="function">
    <text evidence="1">Part of the Sec protein translocase complex. Interacts with the SecYEG preprotein conducting channel. Has a central role in coupling the hydrolysis of ATP to the transfer of proteins into and across the cell membrane, serving as an ATP-driven molecular motor driving the stepwise translocation of polypeptide chains across the membrane.</text>
</comment>
<comment type="function">
    <text evidence="1">Probably participates in protein translocation into and across both the cytoplasmic and thylakoid membranes in cyanobacterial cells.</text>
</comment>
<comment type="catalytic activity">
    <reaction evidence="1">
        <text>ATP + H2O + cellular proteinSide 1 = ADP + phosphate + cellular proteinSide 2.</text>
        <dbReference type="EC" id="7.4.2.8"/>
    </reaction>
</comment>
<comment type="subunit">
    <text evidence="1">Monomer and homodimer. Part of the essential Sec protein translocation apparatus which comprises SecA, SecYEG and auxiliary proteins SecDF. Other proteins may also be involved.</text>
</comment>
<comment type="subcellular location">
    <subcellularLocation>
        <location evidence="1">Cell inner membrane</location>
        <topology evidence="1">Peripheral membrane protein</topology>
        <orientation evidence="1">Cytoplasmic side</orientation>
    </subcellularLocation>
    <subcellularLocation>
        <location evidence="1">Cellular thylakoid membrane</location>
        <topology evidence="1">Peripheral membrane protein</topology>
        <orientation evidence="1">Cytoplasmic side</orientation>
    </subcellularLocation>
    <subcellularLocation>
        <location evidence="1">Cytoplasm</location>
    </subcellularLocation>
</comment>
<comment type="similarity">
    <text evidence="1">Belongs to the SecA family.</text>
</comment>
<sequence>MLKLLLGDPNARKLKKYQPYITEINLLEEDIKVLSDEDLKGKTAEFKQRLAKGETLDDILPEAFAVVREAGRRVLGLRHFDVQMLGGVILHSGQIAEMKTGEGKTLVATLPSYLNALTGKGVHVITVNDYLARRDAEWMGQVHRFLGLSVGLIQSSMTPSERQKNYECDITYVTNSEVGFDYLRDNMATSMADVVQRPFNYCVIDEVDSILVDEARTPLIISGQVERPTEKYVQAAEIALTLQKDEHYEVDEKARNVLLTDEGFAQAEELLGVTDLFDPEDPWAHFVFNAIKAKELFLKDVNYIVRNGEVVIVDEFTGRVLPGRRWSDGLHQAIEAKEHVDIQPETQTLATITYQNLFLLYPKLGGMTGTAKTEEAEFERIYKLEVTIIPTNRIRRREDLSDLVFKKEIGKWQAIARECAEMHELGRPVLVGTTSVEKSEYLSQLLREQGIPHELLNARPENVEREAEIVAQAGRRGAVTIATNMAGRGTDIILGGNSEYMARLKLREYFMPRIVRPDDEDVFGVQRAAGLPTGHGAGQGFVPGKKVKTWKASPEIFPTQLSKEAEQLLKEAVDFAVREYGDRSLPELEAEDKVAVAAEKAPTNDPVIQKLRDAYKRIKQEYEEFTSTEHDEVVSRGGLHVIGTERHESRRIDNQLRGRAGRQGDPGSTRFFLSLEDNLLRIFGGDRVAGLMEAFNVEDDMPIESGMLTRSLEGAQRKVETYYYDIRKQVFEYDEVMNNQRRAIYAERRRVLEGQDLKEQVIKYAEKTMDEIVDYYINVDLPSEEWELDKLVDKVKEFVYLLSDMQASQLEDMGVSEIKAFLHEQVRIAYDLKEAQIDQIQPGLMRQAERFFILQRIDTLWREHLQQMDALRESVGLRGYGQKDPLIEYKSEGYELFLDMMVNIRRDVVYSLFMFQPQPQPVVQTSSEMV</sequence>
<proteinExistence type="inferred from homology"/>
<name>SECA_TRIV2</name>
<reference key="1">
    <citation type="journal article" date="2014" name="Stand. Genomic Sci.">
        <title>Complete genome sequence of Anabaena variabilis ATCC 29413.</title>
        <authorList>
            <person name="Thiel T."/>
            <person name="Pratte B.S."/>
            <person name="Zhong J."/>
            <person name="Goodwin L."/>
            <person name="Copeland A."/>
            <person name="Lucas S."/>
            <person name="Han C."/>
            <person name="Pitluck S."/>
            <person name="Land M.L."/>
            <person name="Kyrpides N.C."/>
            <person name="Woyke T."/>
        </authorList>
    </citation>
    <scope>NUCLEOTIDE SEQUENCE [LARGE SCALE GENOMIC DNA]</scope>
    <source>
        <strain>ATCC 29413 / PCC 7937</strain>
    </source>
</reference>
<evidence type="ECO:0000255" key="1">
    <source>
        <dbReference type="HAMAP-Rule" id="MF_01382"/>
    </source>
</evidence>